<gene>
    <name evidence="1" type="primary">hemE</name>
    <name type="ordered locus">BceJ2315_00400</name>
    <name type="ORF">BCAL0040</name>
</gene>
<evidence type="ECO:0000255" key="1">
    <source>
        <dbReference type="HAMAP-Rule" id="MF_00218"/>
    </source>
</evidence>
<name>DCUP_BURCJ</name>
<reference key="1">
    <citation type="journal article" date="2009" name="J. Bacteriol.">
        <title>The genome of Burkholderia cenocepacia J2315, an epidemic pathogen of cystic fibrosis patients.</title>
        <authorList>
            <person name="Holden M.T."/>
            <person name="Seth-Smith H.M."/>
            <person name="Crossman L.C."/>
            <person name="Sebaihia M."/>
            <person name="Bentley S.D."/>
            <person name="Cerdeno-Tarraga A.M."/>
            <person name="Thomson N.R."/>
            <person name="Bason N."/>
            <person name="Quail M.A."/>
            <person name="Sharp S."/>
            <person name="Cherevach I."/>
            <person name="Churcher C."/>
            <person name="Goodhead I."/>
            <person name="Hauser H."/>
            <person name="Holroyd N."/>
            <person name="Mungall K."/>
            <person name="Scott P."/>
            <person name="Walker D."/>
            <person name="White B."/>
            <person name="Rose H."/>
            <person name="Iversen P."/>
            <person name="Mil-Homens D."/>
            <person name="Rocha E.P."/>
            <person name="Fialho A.M."/>
            <person name="Baldwin A."/>
            <person name="Dowson C."/>
            <person name="Barrell B.G."/>
            <person name="Govan J.R."/>
            <person name="Vandamme P."/>
            <person name="Hart C.A."/>
            <person name="Mahenthiralingam E."/>
            <person name="Parkhill J."/>
        </authorList>
    </citation>
    <scope>NUCLEOTIDE SEQUENCE [LARGE SCALE GENOMIC DNA]</scope>
    <source>
        <strain>ATCC BAA-245 / DSM 16553 / LMG 16656 / NCTC 13227 / J2315 / CF5610</strain>
    </source>
</reference>
<accession>B4EEZ3</accession>
<dbReference type="EC" id="4.1.1.37" evidence="1"/>
<dbReference type="EMBL" id="AM747720">
    <property type="protein sequence ID" value="CAR50346.1"/>
    <property type="molecule type" value="Genomic_DNA"/>
</dbReference>
<dbReference type="SMR" id="B4EEZ3"/>
<dbReference type="KEGG" id="bcj:BCAL0040"/>
<dbReference type="eggNOG" id="COG0407">
    <property type="taxonomic scope" value="Bacteria"/>
</dbReference>
<dbReference type="HOGENOM" id="CLU_040933_0_0_4"/>
<dbReference type="BioCyc" id="BCEN216591:G1G1V-44-MONOMER"/>
<dbReference type="UniPathway" id="UPA00251">
    <property type="reaction ID" value="UER00321"/>
</dbReference>
<dbReference type="Proteomes" id="UP000001035">
    <property type="component" value="Chromosome 1"/>
</dbReference>
<dbReference type="GO" id="GO:0005829">
    <property type="term" value="C:cytosol"/>
    <property type="evidence" value="ECO:0007669"/>
    <property type="project" value="TreeGrafter"/>
</dbReference>
<dbReference type="GO" id="GO:0004853">
    <property type="term" value="F:uroporphyrinogen decarboxylase activity"/>
    <property type="evidence" value="ECO:0007669"/>
    <property type="project" value="UniProtKB-UniRule"/>
</dbReference>
<dbReference type="GO" id="GO:0019353">
    <property type="term" value="P:protoporphyrinogen IX biosynthetic process from glutamate"/>
    <property type="evidence" value="ECO:0007669"/>
    <property type="project" value="TreeGrafter"/>
</dbReference>
<dbReference type="CDD" id="cd00717">
    <property type="entry name" value="URO-D"/>
    <property type="match status" value="1"/>
</dbReference>
<dbReference type="FunFam" id="3.20.20.210:FF:000001">
    <property type="entry name" value="Uroporphyrinogen decarboxylase"/>
    <property type="match status" value="1"/>
</dbReference>
<dbReference type="Gene3D" id="3.20.20.210">
    <property type="match status" value="1"/>
</dbReference>
<dbReference type="HAMAP" id="MF_00218">
    <property type="entry name" value="URO_D"/>
    <property type="match status" value="1"/>
</dbReference>
<dbReference type="InterPro" id="IPR038071">
    <property type="entry name" value="UROD/MetE-like_sf"/>
</dbReference>
<dbReference type="InterPro" id="IPR006361">
    <property type="entry name" value="Uroporphyrinogen_deCO2ase_HemE"/>
</dbReference>
<dbReference type="InterPro" id="IPR000257">
    <property type="entry name" value="Uroporphyrinogen_deCOase"/>
</dbReference>
<dbReference type="NCBIfam" id="TIGR01464">
    <property type="entry name" value="hemE"/>
    <property type="match status" value="1"/>
</dbReference>
<dbReference type="PANTHER" id="PTHR21091">
    <property type="entry name" value="METHYLTETRAHYDROFOLATE:HOMOCYSTEINE METHYLTRANSFERASE RELATED"/>
    <property type="match status" value="1"/>
</dbReference>
<dbReference type="PANTHER" id="PTHR21091:SF169">
    <property type="entry name" value="UROPORPHYRINOGEN DECARBOXYLASE"/>
    <property type="match status" value="1"/>
</dbReference>
<dbReference type="Pfam" id="PF01208">
    <property type="entry name" value="URO-D"/>
    <property type="match status" value="1"/>
</dbReference>
<dbReference type="SUPFAM" id="SSF51726">
    <property type="entry name" value="UROD/MetE-like"/>
    <property type="match status" value="1"/>
</dbReference>
<dbReference type="PROSITE" id="PS00906">
    <property type="entry name" value="UROD_1"/>
    <property type="match status" value="1"/>
</dbReference>
<dbReference type="PROSITE" id="PS00907">
    <property type="entry name" value="UROD_2"/>
    <property type="match status" value="1"/>
</dbReference>
<organism>
    <name type="scientific">Burkholderia cenocepacia (strain ATCC BAA-245 / DSM 16553 / LMG 16656 / NCTC 13227 / J2315 / CF5610)</name>
    <name type="common">Burkholderia cepacia (strain J2315)</name>
    <dbReference type="NCBI Taxonomy" id="216591"/>
    <lineage>
        <taxon>Bacteria</taxon>
        <taxon>Pseudomonadati</taxon>
        <taxon>Pseudomonadota</taxon>
        <taxon>Betaproteobacteria</taxon>
        <taxon>Burkholderiales</taxon>
        <taxon>Burkholderiaceae</taxon>
        <taxon>Burkholderia</taxon>
        <taxon>Burkholderia cepacia complex</taxon>
    </lineage>
</organism>
<keyword id="KW-0963">Cytoplasm</keyword>
<keyword id="KW-0210">Decarboxylase</keyword>
<keyword id="KW-0456">Lyase</keyword>
<keyword id="KW-0627">Porphyrin biosynthesis</keyword>
<protein>
    <recommendedName>
        <fullName evidence="1">Uroporphyrinogen decarboxylase</fullName>
        <shortName evidence="1">UPD</shortName>
        <shortName evidence="1">URO-D</shortName>
        <ecNumber evidence="1">4.1.1.37</ecNumber>
    </recommendedName>
</protein>
<feature type="chain" id="PRO_1000099976" description="Uroporphyrinogen decarboxylase">
    <location>
        <begin position="1"/>
        <end position="364"/>
    </location>
</feature>
<feature type="binding site" evidence="1">
    <location>
        <begin position="28"/>
        <end position="32"/>
    </location>
    <ligand>
        <name>substrate</name>
    </ligand>
</feature>
<feature type="binding site" evidence="1">
    <location>
        <position position="78"/>
    </location>
    <ligand>
        <name>substrate</name>
    </ligand>
</feature>
<feature type="binding site" evidence="1">
    <location>
        <position position="160"/>
    </location>
    <ligand>
        <name>substrate</name>
    </ligand>
</feature>
<feature type="binding site" evidence="1">
    <location>
        <position position="215"/>
    </location>
    <ligand>
        <name>substrate</name>
    </ligand>
</feature>
<feature type="binding site" evidence="1">
    <location>
        <position position="333"/>
    </location>
    <ligand>
        <name>substrate</name>
    </ligand>
</feature>
<feature type="site" description="Transition state stabilizer" evidence="1">
    <location>
        <position position="78"/>
    </location>
</feature>
<sequence length="364" mass="39545">MAHNLLNDTFLRALLREPTDYTPIWLMRQAGRYLPEYNATRARAGSFLGLAKNPDYATEVTLQPLERFPLDAAILFSDILTIPDAMGLGLDFQVGEGPKFAHPVRTEADVAKLAVPDIEATLGYVTGAVREIRRALTDAQGRQRVPLIGFSGSPWTLACYMVEGGGSDDFRTVKSMAYSRPDLMHRILDVNAQAVAAYLNAQIEAGAQAVMIFDTWGGALADGAYQRFSLDYIRRVVSQLKREHDGERVPVITFTKGGGLWLEEIAATGVDAVGLDWTVNLGAARERVAGRVALQGNLDPTILFAPPAAVREQARAVLDSYGNHPGHVFNLGHGISQFTSPDHVAELVDEVHTHSRAIRSGAAG</sequence>
<proteinExistence type="inferred from homology"/>
<comment type="function">
    <text evidence="1">Catalyzes the decarboxylation of four acetate groups of uroporphyrinogen-III to yield coproporphyrinogen-III.</text>
</comment>
<comment type="catalytic activity">
    <reaction evidence="1">
        <text>uroporphyrinogen III + 4 H(+) = coproporphyrinogen III + 4 CO2</text>
        <dbReference type="Rhea" id="RHEA:19865"/>
        <dbReference type="ChEBI" id="CHEBI:15378"/>
        <dbReference type="ChEBI" id="CHEBI:16526"/>
        <dbReference type="ChEBI" id="CHEBI:57308"/>
        <dbReference type="ChEBI" id="CHEBI:57309"/>
        <dbReference type="EC" id="4.1.1.37"/>
    </reaction>
</comment>
<comment type="pathway">
    <text evidence="1">Porphyrin-containing compound metabolism; protoporphyrin-IX biosynthesis; coproporphyrinogen-III from 5-aminolevulinate: step 4/4.</text>
</comment>
<comment type="subunit">
    <text evidence="1">Homodimer.</text>
</comment>
<comment type="subcellular location">
    <subcellularLocation>
        <location evidence="1">Cytoplasm</location>
    </subcellularLocation>
</comment>
<comment type="similarity">
    <text evidence="1">Belongs to the uroporphyrinogen decarboxylase family.</text>
</comment>